<accession>Q5UQ22</accession>
<accession>Q5UQ23</accession>
<proteinExistence type="predicted"/>
<keyword id="KW-0067">ATP-binding</keyword>
<keyword id="KW-0347">Helicase</keyword>
<keyword id="KW-0378">Hydrolase</keyword>
<keyword id="KW-0547">Nucleotide-binding</keyword>
<keyword id="KW-1185">Reference proteome</keyword>
<name>YL207_MIMIV</name>
<comment type="sequence caution" evidence="3">
    <conflict type="frameshift">
        <sequence resource="EMBL-CDS" id="AAV50479"/>
    </conflict>
</comment>
<comment type="sequence caution" evidence="3">
    <conflict type="frameshift">
        <sequence resource="EMBL-CDS" id="AAV50480"/>
    </conflict>
</comment>
<sequence length="960" mass="111988">MTSKTENKKSVSSKTGRTTNNSTNKKTTEKSVKNVKTVKNNVSIDKNHSIRKNNEWERLYAFMMKYRVKGEKGSNLPVTHTMCDAPYGKYNIPDDMRSKFLRLYENAIVAGFKPHITELHKEYGPIIIDLDFCQPKEHGKRYYTEITIRNVVKLYNSIIKKYLNVEHSSFVTYVSEKERPVLRNGEYHDGLHITYPYICTQPSLQFVMREEFIKLAKKYKIFQKIPLTNNLESVFDEGVIYKTGWLLYGSRKNENSYPYYVSHCFLSIRNELHDYIIPGDNLKSRENIRHFINTHSCRRFFSLNDLTPLAEGVDPLAIDAKLKKIKEKINNNTNNTNTHKNTAELGDHHFNFIKAVSEETLVEAKNLVKLFSVQRATDYHTWYQVGRCLSNIDHRLLEDWITFSKKCPSKFKKEECERLWRNMNMKPSNYTMATLHYFASKDDPDKYFEMKKLKIDGLIKEGMEASHHTIAKLLIEKYKFIYKCASIKNGIWYEFRNHRWIEIDSAYTLRNLISEVLVNEYANRQRILFGEATRQDAENKKEKFNDAVNITKVIKQLNNNTFKNGVIKECADIAYDPNFLRNLDENNYLIGFENGVFDLEAGIFRDGCPDDCISLCTNYKYIEIDEDDETFKNINGFLKKIQPDKSMREYILTLLSTCLSGTNSEESFYVLTGSGANGKSKLMELLKYTLGDLYKPMDIRLLTEKRSSSSSASPELADKKGIRACPFDEPKASDEINTGFMKIFTGGDTITARALYKEPIYFKPQFKPFLLCNELPTIKSDDDGTWRRLKVIPFLSKFIKHSEATKKMKKEGLPKNHFWADTSLSEKLPDWKQGFMCLLLKYFRKYRKHGLIHPKLVTQHTVEYRKKCDVFQDFIGDYLVRVDNTKKGISVMDLYQNMREWYKSNYTGKCPNAKDLRNYVQHRMPTYNKNADMLTCYVLKTEVNQAGELIDDIDNITVVG</sequence>
<organism>
    <name type="scientific">Acanthamoeba polyphaga mimivirus</name>
    <name type="common">APMV</name>
    <dbReference type="NCBI Taxonomy" id="212035"/>
    <lineage>
        <taxon>Viruses</taxon>
        <taxon>Varidnaviria</taxon>
        <taxon>Bamfordvirae</taxon>
        <taxon>Nucleocytoviricota</taxon>
        <taxon>Megaviricetes</taxon>
        <taxon>Imitervirales</taxon>
        <taxon>Mimiviridae</taxon>
        <taxon>Megamimivirinae</taxon>
        <taxon>Mimivirus</taxon>
        <taxon>Mimivirus bradfordmassiliense</taxon>
    </lineage>
</organism>
<evidence type="ECO:0000255" key="1">
    <source>
        <dbReference type="PROSITE-ProRule" id="PRU00551"/>
    </source>
</evidence>
<evidence type="ECO:0000256" key="2">
    <source>
        <dbReference type="SAM" id="MobiDB-lite"/>
    </source>
</evidence>
<evidence type="ECO:0000305" key="3"/>
<feature type="chain" id="PRO_0000253206" description="Putative helicase L207/L206">
    <location>
        <begin position="1"/>
        <end position="960"/>
    </location>
</feature>
<feature type="domain" description="SF3 helicase" evidence="1">
    <location>
        <begin position="646"/>
        <end position="807"/>
    </location>
</feature>
<feature type="region of interest" description="Disordered" evidence="2">
    <location>
        <begin position="1"/>
        <end position="32"/>
    </location>
</feature>
<feature type="compositionally biased region" description="Low complexity" evidence="2">
    <location>
        <begin position="12"/>
        <end position="25"/>
    </location>
</feature>
<dbReference type="EC" id="3.6.4.-"/>
<dbReference type="EMBL" id="AY653733">
    <property type="protein sequence ID" value="AAV50480.1"/>
    <property type="status" value="ALT_FRAME"/>
    <property type="molecule type" value="Genomic_DNA"/>
</dbReference>
<dbReference type="EMBL" id="AY653733">
    <property type="protein sequence ID" value="AAV50479.1"/>
    <property type="status" value="ALT_FRAME"/>
    <property type="molecule type" value="Genomic_DNA"/>
</dbReference>
<dbReference type="SMR" id="Q5UQ22"/>
<dbReference type="KEGG" id="vg:9924814"/>
<dbReference type="OrthoDB" id="987at10239"/>
<dbReference type="Proteomes" id="UP000001134">
    <property type="component" value="Genome"/>
</dbReference>
<dbReference type="GO" id="GO:0005524">
    <property type="term" value="F:ATP binding"/>
    <property type="evidence" value="ECO:0007669"/>
    <property type="project" value="UniProtKB-KW"/>
</dbReference>
<dbReference type="GO" id="GO:0004386">
    <property type="term" value="F:helicase activity"/>
    <property type="evidence" value="ECO:0007669"/>
    <property type="project" value="UniProtKB-KW"/>
</dbReference>
<dbReference type="GO" id="GO:0016817">
    <property type="term" value="F:hydrolase activity, acting on acid anhydrides"/>
    <property type="evidence" value="ECO:0007669"/>
    <property type="project" value="InterPro"/>
</dbReference>
<dbReference type="Gene3D" id="3.40.50.300">
    <property type="entry name" value="P-loop containing nucleotide triphosphate hydrolases"/>
    <property type="match status" value="1"/>
</dbReference>
<dbReference type="InterPro" id="IPR056443">
    <property type="entry name" value="AEP_C962R"/>
</dbReference>
<dbReference type="InterPro" id="IPR006500">
    <property type="entry name" value="Helicase_put_C_phage/plasmid"/>
</dbReference>
<dbReference type="InterPro" id="IPR014015">
    <property type="entry name" value="Helicase_SF3_DNA-vir"/>
</dbReference>
<dbReference type="InterPro" id="IPR045455">
    <property type="entry name" value="NrS-1_pol-like_helicase"/>
</dbReference>
<dbReference type="InterPro" id="IPR027417">
    <property type="entry name" value="P-loop_NTPase"/>
</dbReference>
<dbReference type="InterPro" id="IPR014818">
    <property type="entry name" value="Phage/plasmid_primase_P4_C"/>
</dbReference>
<dbReference type="InterPro" id="IPR014819">
    <property type="entry name" value="PriCT_2"/>
</dbReference>
<dbReference type="InterPro" id="IPR051620">
    <property type="entry name" value="Viral_Helicase-Primase_Cplx"/>
</dbReference>
<dbReference type="NCBIfam" id="TIGR01613">
    <property type="entry name" value="primase_Cterm"/>
    <property type="match status" value="1"/>
</dbReference>
<dbReference type="PANTHER" id="PTHR35372">
    <property type="entry name" value="ATP BINDING PROTEIN-RELATED"/>
    <property type="match status" value="1"/>
</dbReference>
<dbReference type="PANTHER" id="PTHR35372:SF2">
    <property type="entry name" value="SF3 HELICASE DOMAIN-CONTAINING PROTEIN"/>
    <property type="match status" value="1"/>
</dbReference>
<dbReference type="Pfam" id="PF23162">
    <property type="entry name" value="AEP_C962R"/>
    <property type="match status" value="1"/>
</dbReference>
<dbReference type="Pfam" id="PF08706">
    <property type="entry name" value="D5_N"/>
    <property type="match status" value="1"/>
</dbReference>
<dbReference type="Pfam" id="PF19263">
    <property type="entry name" value="DUF5906"/>
    <property type="match status" value="1"/>
</dbReference>
<dbReference type="Pfam" id="PF08707">
    <property type="entry name" value="PriCT_2"/>
    <property type="match status" value="1"/>
</dbReference>
<dbReference type="SMART" id="SM00885">
    <property type="entry name" value="D5_N"/>
    <property type="match status" value="1"/>
</dbReference>
<dbReference type="SUPFAM" id="SSF52540">
    <property type="entry name" value="P-loop containing nucleoside triphosphate hydrolases"/>
    <property type="match status" value="1"/>
</dbReference>
<dbReference type="PROSITE" id="PS51206">
    <property type="entry name" value="SF3_HELICASE_1"/>
    <property type="match status" value="1"/>
</dbReference>
<organismHost>
    <name type="scientific">Acanthamoeba polyphaga</name>
    <name type="common">Amoeba</name>
    <dbReference type="NCBI Taxonomy" id="5757"/>
</organismHost>
<protein>
    <recommendedName>
        <fullName>Putative helicase L207/L206</fullName>
        <ecNumber>3.6.4.-</ecNumber>
    </recommendedName>
</protein>
<reference key="1">
    <citation type="journal article" date="2004" name="Science">
        <title>The 1.2-megabase genome sequence of Mimivirus.</title>
        <authorList>
            <person name="Raoult D."/>
            <person name="Audic S."/>
            <person name="Robert C."/>
            <person name="Abergel C."/>
            <person name="Renesto P."/>
            <person name="Ogata H."/>
            <person name="La Scola B."/>
            <person name="Susan M."/>
            <person name="Claverie J.-M."/>
        </authorList>
    </citation>
    <scope>NUCLEOTIDE SEQUENCE [LARGE SCALE GENOMIC DNA]</scope>
    <source>
        <strain>Rowbotham-Bradford</strain>
    </source>
</reference>
<reference key="2">
    <citation type="submission" date="2007-09" db="UniProtKB">
        <authorList>
            <person name="Audic S."/>
        </authorList>
    </citation>
    <scope>SEQUENCE REVISION</scope>
</reference>
<gene>
    <name type="ordered locus">MIMI_L206</name>
    <name type="ordered locus">MIMI_L207</name>
</gene>